<keyword id="KW-0002">3D-structure</keyword>
<keyword id="KW-0067">ATP-binding</keyword>
<keyword id="KW-0143">Chaperone</keyword>
<keyword id="KW-0903">Direct protein sequencing</keyword>
<keyword id="KW-0378">Hydrolase</keyword>
<keyword id="KW-0460">Magnesium</keyword>
<keyword id="KW-0479">Metal-binding</keyword>
<keyword id="KW-0547">Nucleotide-binding</keyword>
<feature type="chain" id="PRO_0000412975" description="Diol dehydratase-reactivating factor large subunit">
    <location>
        <begin position="1"/>
        <end position="610"/>
    </location>
</feature>
<feature type="binding site" evidence="14">
    <location>
        <begin position="11"/>
        <end position="13"/>
    </location>
    <ligand>
        <name>ATP</name>
        <dbReference type="ChEBI" id="CHEBI:30616"/>
    </ligand>
</feature>
<feature type="binding site" evidence="2 14">
    <location>
        <position position="105"/>
    </location>
    <ligand>
        <name>Mg(2+)</name>
        <dbReference type="ChEBI" id="CHEBI:18420"/>
    </ligand>
</feature>
<feature type="binding site" evidence="2 14">
    <location>
        <position position="166"/>
    </location>
    <ligand>
        <name>Mg(2+)</name>
        <dbReference type="ChEBI" id="CHEBI:18420"/>
    </ligand>
</feature>
<feature type="binding site" evidence="2 14">
    <location>
        <position position="183"/>
    </location>
    <ligand>
        <name>Mg(2+)</name>
        <dbReference type="ChEBI" id="CHEBI:18420"/>
    </ligand>
</feature>
<feature type="binding site" evidence="14">
    <location>
        <begin position="459"/>
        <end position="462"/>
    </location>
    <ligand>
        <name>ATP</name>
        <dbReference type="ChEBI" id="CHEBI:30616"/>
    </ligand>
</feature>
<feature type="binding site" evidence="14">
    <location>
        <begin position="557"/>
        <end position="558"/>
    </location>
    <ligand>
        <name>ATP</name>
        <dbReference type="ChEBI" id="CHEBI:30616"/>
    </ligand>
</feature>
<feature type="binding site" evidence="14">
    <location>
        <position position="591"/>
    </location>
    <ligand>
        <name>ATP</name>
        <dbReference type="ChEBI" id="CHEBI:30616"/>
    </ligand>
</feature>
<feature type="strand" evidence="16">
    <location>
        <begin position="2"/>
        <end position="9"/>
    </location>
</feature>
<feature type="strand" evidence="16">
    <location>
        <begin position="11"/>
        <end position="21"/>
    </location>
</feature>
<feature type="strand" evidence="16">
    <location>
        <begin position="27"/>
        <end position="36"/>
    </location>
</feature>
<feature type="helix" evidence="16">
    <location>
        <begin position="44"/>
        <end position="46"/>
    </location>
</feature>
<feature type="helix" evidence="16">
    <location>
        <begin position="47"/>
        <end position="61"/>
    </location>
</feature>
<feature type="helix" evidence="16">
    <location>
        <begin position="65"/>
        <end position="67"/>
    </location>
</feature>
<feature type="strand" evidence="16">
    <location>
        <begin position="68"/>
        <end position="75"/>
    </location>
</feature>
<feature type="strand" evidence="16">
    <location>
        <begin position="78"/>
        <end position="87"/>
    </location>
</feature>
<feature type="strand" evidence="16">
    <location>
        <begin position="89"/>
        <end position="93"/>
    </location>
</feature>
<feature type="strand" evidence="16">
    <location>
        <begin position="110"/>
        <end position="117"/>
    </location>
</feature>
<feature type="helix" evidence="16">
    <location>
        <begin position="119"/>
        <end position="123"/>
    </location>
</feature>
<feature type="strand" evidence="16">
    <location>
        <begin position="129"/>
        <end position="135"/>
    </location>
</feature>
<feature type="helix" evidence="16">
    <location>
        <begin position="141"/>
        <end position="153"/>
    </location>
</feature>
<feature type="strand" evidence="16">
    <location>
        <begin position="157"/>
        <end position="166"/>
    </location>
</feature>
<feature type="helix" evidence="16">
    <location>
        <begin position="168"/>
        <end position="173"/>
    </location>
</feature>
<feature type="helix" evidence="16">
    <location>
        <begin position="188"/>
        <end position="190"/>
    </location>
</feature>
<feature type="strand" evidence="16">
    <location>
        <begin position="193"/>
        <end position="201"/>
    </location>
</feature>
<feature type="helix" evidence="16">
    <location>
        <begin position="214"/>
        <end position="220"/>
    </location>
</feature>
<feature type="helix" evidence="16">
    <location>
        <begin position="225"/>
        <end position="230"/>
    </location>
</feature>
<feature type="helix" evidence="16">
    <location>
        <begin position="232"/>
        <end position="237"/>
    </location>
</feature>
<feature type="turn" evidence="16">
    <location>
        <begin position="238"/>
        <end position="240"/>
    </location>
</feature>
<feature type="strand" evidence="16">
    <location>
        <begin position="242"/>
        <end position="247"/>
    </location>
</feature>
<feature type="strand" evidence="16">
    <location>
        <begin position="254"/>
        <end position="258"/>
    </location>
</feature>
<feature type="strand" evidence="16">
    <location>
        <begin position="263"/>
        <end position="268"/>
    </location>
</feature>
<feature type="strand" evidence="16">
    <location>
        <begin position="271"/>
        <end position="276"/>
    </location>
</feature>
<feature type="helix" evidence="16">
    <location>
        <begin position="277"/>
        <end position="279"/>
    </location>
</feature>
<feature type="helix" evidence="16">
    <location>
        <begin position="281"/>
        <end position="288"/>
    </location>
</feature>
<feature type="strand" evidence="16">
    <location>
        <begin position="291"/>
        <end position="293"/>
    </location>
</feature>
<feature type="strand" evidence="16">
    <location>
        <begin position="296"/>
        <end position="298"/>
    </location>
</feature>
<feature type="helix" evidence="16">
    <location>
        <begin position="304"/>
        <end position="319"/>
    </location>
</feature>
<feature type="helix" evidence="16">
    <location>
        <begin position="324"/>
        <end position="326"/>
    </location>
</feature>
<feature type="strand" evidence="16">
    <location>
        <begin position="329"/>
        <end position="342"/>
    </location>
</feature>
<feature type="strand" evidence="16">
    <location>
        <begin position="351"/>
        <end position="364"/>
    </location>
</feature>
<feature type="helix" evidence="16">
    <location>
        <begin position="370"/>
        <end position="381"/>
    </location>
</feature>
<feature type="strand" evidence="16">
    <location>
        <begin position="384"/>
        <end position="390"/>
    </location>
</feature>
<feature type="helix" evidence="16">
    <location>
        <begin position="391"/>
        <end position="399"/>
    </location>
</feature>
<feature type="strand" evidence="16">
    <location>
        <begin position="407"/>
        <end position="414"/>
    </location>
</feature>
<feature type="strand" evidence="16">
    <location>
        <begin position="416"/>
        <end position="424"/>
    </location>
</feature>
<feature type="strand" evidence="17">
    <location>
        <begin position="426"/>
        <end position="428"/>
    </location>
</feature>
<feature type="strand" evidence="16">
    <location>
        <begin position="430"/>
        <end position="436"/>
    </location>
</feature>
<feature type="helix" evidence="16">
    <location>
        <begin position="439"/>
        <end position="450"/>
    </location>
</feature>
<feature type="helix" evidence="16">
    <location>
        <begin position="455"/>
        <end position="463"/>
    </location>
</feature>
<feature type="strand" evidence="16">
    <location>
        <begin position="466"/>
        <end position="469"/>
    </location>
</feature>
<feature type="strand" evidence="16">
    <location>
        <begin position="471"/>
        <end position="477"/>
    </location>
</feature>
<feature type="strand" evidence="16">
    <location>
        <begin position="482"/>
        <end position="484"/>
    </location>
</feature>
<feature type="helix" evidence="16">
    <location>
        <begin position="491"/>
        <end position="493"/>
    </location>
</feature>
<feature type="strand" evidence="16">
    <location>
        <begin position="497"/>
        <end position="500"/>
    </location>
</feature>
<feature type="strand" evidence="16">
    <location>
        <begin position="505"/>
        <end position="507"/>
    </location>
</feature>
<feature type="helix" evidence="16">
    <location>
        <begin position="514"/>
        <end position="540"/>
    </location>
</feature>
<feature type="strand" evidence="16">
    <location>
        <begin position="541"/>
        <end position="544"/>
    </location>
</feature>
<feature type="helix" evidence="16">
    <location>
        <begin position="546"/>
        <end position="548"/>
    </location>
</feature>
<feature type="strand" evidence="16">
    <location>
        <begin position="551"/>
        <end position="556"/>
    </location>
</feature>
<feature type="helix" evidence="16">
    <location>
        <begin position="557"/>
        <end position="560"/>
    </location>
</feature>
<feature type="strand" evidence="17">
    <location>
        <begin position="561"/>
        <end position="563"/>
    </location>
</feature>
<feature type="helix" evidence="16">
    <location>
        <begin position="564"/>
        <end position="571"/>
    </location>
</feature>
<feature type="turn" evidence="16">
    <location>
        <begin position="572"/>
        <end position="574"/>
    </location>
</feature>
<feature type="strand" evidence="16">
    <location>
        <begin position="578"/>
        <end position="581"/>
    </location>
</feature>
<feature type="helix" evidence="16">
    <location>
        <begin position="584"/>
        <end position="586"/>
    </location>
</feature>
<feature type="helix" evidence="16">
    <location>
        <begin position="593"/>
        <end position="605"/>
    </location>
</feature>
<evidence type="ECO:0000269" key="1">
    <source>
    </source>
</evidence>
<evidence type="ECO:0000269" key="2">
    <source>
    </source>
</evidence>
<evidence type="ECO:0000269" key="3">
    <source>
    </source>
</evidence>
<evidence type="ECO:0000269" key="4">
    <source>
    </source>
</evidence>
<evidence type="ECO:0000269" key="5">
    <source>
    </source>
</evidence>
<evidence type="ECO:0000269" key="6">
    <source>
    </source>
</evidence>
<evidence type="ECO:0000269" key="7">
    <source>
    </source>
</evidence>
<evidence type="ECO:0000303" key="8">
    <source>
    </source>
</evidence>
<evidence type="ECO:0000303" key="9">
    <source>
    </source>
</evidence>
<evidence type="ECO:0000303" key="10">
    <source>
    </source>
</evidence>
<evidence type="ECO:0000303" key="11">
    <source>
    </source>
</evidence>
<evidence type="ECO:0000305" key="12"/>
<evidence type="ECO:0000305" key="13">
    <source>
    </source>
</evidence>
<evidence type="ECO:0007744" key="14">
    <source>
        <dbReference type="PDB" id="2D0O"/>
    </source>
</evidence>
<evidence type="ECO:0007744" key="15">
    <source>
        <dbReference type="PDB" id="2D0P"/>
    </source>
</evidence>
<evidence type="ECO:0007829" key="16">
    <source>
        <dbReference type="PDB" id="2D0O"/>
    </source>
</evidence>
<evidence type="ECO:0007829" key="17">
    <source>
        <dbReference type="PDB" id="2D0P"/>
    </source>
</evidence>
<comment type="function">
    <text evidence="1 2 3 4 5 6 7">Large subunit of the diol dehydratase-reactivating factor (DDR), which reactivates suicidally inhibited adenosylcobalamin-dependent diol dehydratase (DD, pddA, pddB, pddC). DDR acts as a chaperone, reactivating inactivated DD holoenzyme in the presence of ATP, Mg(2+) and free adenosylcobalamin (AdoCbl), by mediating the exchange of the tightly bound damaged cofactor AdoCbl for a free intact one (PubMed:10529189, PubMed:17916188, PubMed:18586770, PubMed:21040475, PubMed:9405397, PubMed:9920879). Reactivation takes place in two steps: ADP-dependent cobalamin release, then ATP-dependent dissociation of the DD apoenzyme-DDR complex. DDR has weak ATPase activity which is required for DD reactivation (PubMed:10529189, PubMed:17916188, PubMed:21040475). This subunit contains the adenosine nucleotide binding site (PubMed:16338403). Activates glycerol-inactivated, O2-inactivated holoenzyme and inactivated enzyme-cyanocobalamin complex (PubMed:9920879). Also reactivates glycerol-inactivated hologlycerol dehydratase, a DD isozyme (PubMed:17916188).</text>
</comment>
<comment type="catalytic activity">
    <reaction evidence="1 5">
        <text>ATP + H2O = ADP + phosphate + H(+)</text>
        <dbReference type="Rhea" id="RHEA:13065"/>
        <dbReference type="ChEBI" id="CHEBI:15377"/>
        <dbReference type="ChEBI" id="CHEBI:15378"/>
        <dbReference type="ChEBI" id="CHEBI:30616"/>
        <dbReference type="ChEBI" id="CHEBI:43474"/>
        <dbReference type="ChEBI" id="CHEBI:456216"/>
    </reaction>
</comment>
<comment type="cofactor">
    <cofactor evidence="2 5">
        <name>Mg(2+)</name>
        <dbReference type="ChEBI" id="CHEBI:18420"/>
    </cofactor>
    <text evidence="2 5">One Mg(2+)is bound by the enzyme, a second binds only to the beta-phosphate of DdrA-bound ADP (PubMed:16338403). Co(2+), Mn(2+) and Ni(2+) can substitute in vitro (PubMed:21040475).</text>
</comment>
<comment type="biophysicochemical properties">
    <kinetics>
        <KM evidence="5">6.9 mM for ATP, during activation and reactivation of glycerol-inactivated holoenzyme or enzyme-CN-Cbl complex</KM>
        <text evidence="5">kcat for enzyme-bound damaged AdoCbl is 0.14 min(-1), kcat for reactivation of CN-Cbl-inactivated enzyme is 0.27 min(-1).</text>
    </kinetics>
</comment>
<comment type="subunit">
    <text evidence="1 2 3 5 7 13">Component of the DDR complex, a heterotetramer of DdrA(2)/DdrB(2) (Probable) (PubMed:10529189, PubMed:16338403, PubMed:17916188, PubMed:21040475, PubMed:9920879). The DDR complex interacts with the diol dehydratase complex in the presence of ADP but not ATP (PubMed:10529189, PubMed:21040475).</text>
</comment>
<comment type="interaction">
    <interactant intactId="EBI-8491873">
        <id>O68195</id>
    </interactant>
    <interactant intactId="EBI-8491890">
        <id>O68196</id>
        <label>ddrB</label>
    </interactant>
    <organismsDiffer>false</organismsDiffer>
    <experiments>4</experiments>
</comment>
<comment type="similarity">
    <text evidence="12">Belongs to the DdrA/PduG family.</text>
</comment>
<sequence length="610" mass="64267">MRYIAGIDIGNSSTEVALATLDEAGALTITHSALAETTGIKGTLRNVFGIQEALALVARGAGIAVSDISLIRINEATPVIGDVAMETITETIITESTMIGHNPKTPGGAGLGTGITITPQELLTRPADAPYILVVSSAFDFADIASVINASLRAGYQITGVILQRDDGVLVSNRLEKPLPIVDEVLYIDRIPLGMLAAIEVAVPGKVIETLSNPYGIATVFNLSPEETKNIVPMARALIGNRSAVVVKTPSGDVKARAIPAGNLELLAQGRSVRVDVAAGAEAIMKAVDGCGRLDNVTGESGTNIGGMLEHVRQTMAELTNKPSSEIFIQDLLAVDTSVPVSVTGGLAGEFSLEQAVGIASMVKSDRLQMAMIAREIEQKLNIDVQIGGAEAEAAILGALTTPGTTRPLAILDLGAGSTDASIINPKGDIIATHLAGAGDMVTMIIARELGLEDRYLAEEIKKYPLAKVESLFHLRHEDGSVQFFSTPLPPAVFARVCVVKADELVPLPGDLALEKVRAIRRSAKERVFVTNALRALRQVSPTGNIRDIPFVVLVGGSSLDFEVPQLVTDALAHYRLVAGRGNIRGSEGPRNAVATGLILSWHKEFAHER</sequence>
<reference key="1">
    <citation type="journal article" date="1997" name="J. Biol. Chem.">
        <title>Characterization, sequencing, and expression of the genes encoding a reactivating factor for glycerol-inactivated adenosylcobalamin-dependent diol dehydratase.</title>
        <authorList>
            <person name="Mori K."/>
            <person name="Tobimatsu T."/>
            <person name="Hara T."/>
            <person name="Toraya T."/>
        </authorList>
    </citation>
    <scope>NUCLEOTIDE SEQUENCE [GENOMIC DNA]</scope>
    <scope>PROTEIN SEQUENCE OF 1-10</scope>
    <scope>FUNCTION OF DDR COMPLEX</scope>
    <scope>SUBUNIT</scope>
    <source>
        <strain>ATCC 8724 / DSM 4798 / JCM 20051 / NBRC 3318 / NRRL B-199 / KCTC 1686 / BUCSAV 143 / CCM 1901</strain>
    </source>
</reference>
<reference key="2">
    <citation type="journal article" date="2012" name="J. Bacteriol.">
        <title>Complete genome sequence of Klebsiella oxytoca KCTC 1686, used in production of 2,3-butanediol.</title>
        <authorList>
            <person name="Shin S.H."/>
            <person name="Kim S."/>
            <person name="Kim J.Y."/>
            <person name="Lee S."/>
            <person name="Um Y."/>
            <person name="Oh M.K."/>
            <person name="Kim Y.R."/>
            <person name="Lee J."/>
            <person name="Yang K.S."/>
        </authorList>
    </citation>
    <scope>NUCLEOTIDE SEQUENCE [LARGE SCALE GENOMIC DNA]</scope>
    <source>
        <strain>ATCC 8724 / DSM 4798 / JCM 20051 / NBRC 3318 / NRRL B-199 / KCTC 1686 / BUCSAV 143 / CCM 1901</strain>
    </source>
</reference>
<reference key="3">
    <citation type="journal article" date="1999" name="J. Biol. Chem.">
        <title>A reactivating factor for coenzyme B12-dependent diol dehydratase.</title>
        <authorList>
            <person name="Toraya T."/>
            <person name="Mori K."/>
        </authorList>
    </citation>
    <scope>PROTEIN SEQUENCE OF 1-10</scope>
    <scope>FUNCTION OF DDR COMPLEX</scope>
    <scope>SUBUNIT</scope>
    <source>
        <strain>ATCC 8724 / DSM 4798 / JCM 20051 / NBRC 3318 / NRRL B-199 / KCTC 1686 / BUCSAV 143 / CCM 1901</strain>
    </source>
</reference>
<reference key="4">
    <citation type="journal article" date="1999" name="Biochemistry">
        <title>Mechanism of reactivation of coenzyme B12-dependent diol dehydratase by a molecular chaperone-like reactivating factor.</title>
        <authorList>
            <person name="Mori K."/>
            <person name="Toraya T."/>
        </authorList>
    </citation>
    <scope>FUNCTION OF DDR COMPLEX</scope>
    <scope>REACTION MECHANISM</scope>
    <scope>INTERACTION OF DDR COMPLEX WITH DIOL DEHYDRATASE</scope>
    <scope>ATPASE ACTIVITY OF DDR COMPLEX</scope>
    <source>
        <strain>ATCC 8724 / DSM 4798 / JCM 20051 / NBRC 3318 / NRRL B-199 / KCTC 1686 / BUCSAV 143 / CCM 1901</strain>
    </source>
</reference>
<reference key="5">
    <citation type="journal article" date="2007" name="FEBS J.">
        <title>Molecular basis for specificities of reactivating factors for adenosylcobalamin-dependent diol and glycerol dehydratases.</title>
        <authorList>
            <person name="Kajiura H."/>
            <person name="Mori K."/>
            <person name="Shibata N."/>
            <person name="Toraya T."/>
        </authorList>
    </citation>
    <scope>FUNCTION OF DDR COMPLEX</scope>
    <scope>SUBUNIT</scope>
    <scope>SUBSTRATE SPECIFICITY OF DDR COMPLEX</scope>
</reference>
<reference key="6">
    <citation type="journal article" date="2008" name="J. Biochem.">
        <title>Mechanism-based inactivation of coenzyme B12-dependent diol dehydratase by 3-unsaturated 1,2-diols and thioglycerol.</title>
        <authorList>
            <person name="Toraya T."/>
            <person name="Tamura N."/>
            <person name="Watanabe T."/>
            <person name="Yamanishi M."/>
            <person name="Hieda N."/>
            <person name="Mori K."/>
        </authorList>
    </citation>
    <scope>FUNCTION OF DDR COMPLEX</scope>
</reference>
<reference key="7">
    <citation type="journal article" date="2010" name="FEBS J.">
        <title>Diol dehydratase-reactivating factor is a reactivase--evidence for multiple turnovers and subunit swapping with diol dehydratase.</title>
        <authorList>
            <person name="Mori K."/>
            <person name="Hosokawa Y."/>
            <person name="Yoshinaga T."/>
            <person name="Toraya T."/>
        </authorList>
    </citation>
    <scope>FUNCTION OF DDR COMPLEX</scope>
    <scope>COFACTOR</scope>
    <scope>BIOPHYSICOCHEMICAL PROPERTIES</scope>
    <scope>INTERACTION WITH DDRB AND DIOL DEHYDRATASE</scope>
</reference>
<reference evidence="14 15" key="8">
    <citation type="journal article" date="2005" name="Structure">
        <title>Release of a damaged cofactor from a coenzyme B12-dependent enzyme: X-ray structures of diol dehydratase-reactivating factor.</title>
        <authorList>
            <person name="Shibata N."/>
            <person name="Mori K."/>
            <person name="Hieda N."/>
            <person name="Higuchi Y."/>
            <person name="Yamanishi M."/>
            <person name="Toraya T."/>
        </authorList>
    </citation>
    <scope>X-RAY CRYSTALLOGRAPHY (2.00 ANGSTROMS) IN COMPLEX WITH DDRB; ADP AND MAGNESIUM</scope>
    <scope>COFACTOR</scope>
</reference>
<dbReference type="EMBL" id="AF017781">
    <property type="protein sequence ID" value="AAC15871.1"/>
    <property type="molecule type" value="Genomic_DNA"/>
</dbReference>
<dbReference type="EMBL" id="CP003218">
    <property type="protein sequence ID" value="AEX02039.1"/>
    <property type="molecule type" value="Genomic_DNA"/>
</dbReference>
<dbReference type="PIR" id="T08597">
    <property type="entry name" value="T08597"/>
</dbReference>
<dbReference type="RefSeq" id="WP_014226638.1">
    <property type="nucleotide sequence ID" value="NC_016612.1"/>
</dbReference>
<dbReference type="PDB" id="2D0O">
    <property type="method" value="X-ray"/>
    <property type="resolution" value="2.00 A"/>
    <property type="chains" value="A/C=1-610"/>
</dbReference>
<dbReference type="PDB" id="2D0P">
    <property type="method" value="X-ray"/>
    <property type="resolution" value="3.00 A"/>
    <property type="chains" value="A/C=1-610"/>
</dbReference>
<dbReference type="PDBsum" id="2D0O"/>
<dbReference type="PDBsum" id="2D0P"/>
<dbReference type="SMR" id="O68195"/>
<dbReference type="DIP" id="DIP-48460N"/>
<dbReference type="IntAct" id="O68195">
    <property type="interactions" value="4"/>
</dbReference>
<dbReference type="MINT" id="O68195"/>
<dbReference type="GeneID" id="66558084"/>
<dbReference type="KEGG" id="kox:KOX_01470"/>
<dbReference type="HOGENOM" id="CLU_449540_0_0_6"/>
<dbReference type="EvolutionaryTrace" id="O68195"/>
<dbReference type="PRO" id="PR:O68195"/>
<dbReference type="Proteomes" id="UP000007843">
    <property type="component" value="Chromosome"/>
</dbReference>
<dbReference type="GO" id="GO:0005524">
    <property type="term" value="F:ATP binding"/>
    <property type="evidence" value="ECO:0007669"/>
    <property type="project" value="UniProtKB-KW"/>
</dbReference>
<dbReference type="GO" id="GO:0016787">
    <property type="term" value="F:hydrolase activity"/>
    <property type="evidence" value="ECO:0007669"/>
    <property type="project" value="UniProtKB-KW"/>
</dbReference>
<dbReference type="GO" id="GO:0046872">
    <property type="term" value="F:metal ion binding"/>
    <property type="evidence" value="ECO:0007669"/>
    <property type="project" value="UniProtKB-KW"/>
</dbReference>
<dbReference type="Gene3D" id="3.30.420.40">
    <property type="match status" value="2"/>
</dbReference>
<dbReference type="Gene3D" id="3.90.470.30">
    <property type="match status" value="1"/>
</dbReference>
<dbReference type="Gene3D" id="2.40.50.140">
    <property type="entry name" value="Nucleic acid-binding proteins"/>
    <property type="match status" value="1"/>
</dbReference>
<dbReference type="Gene3D" id="3.50.30.70">
    <property type="entry name" value="Swiveling domain of dehydratase reactivase alpha subunit"/>
    <property type="match status" value="1"/>
</dbReference>
<dbReference type="InterPro" id="IPR043129">
    <property type="entry name" value="ATPase_NBD"/>
</dbReference>
<dbReference type="InterPro" id="IPR030994">
    <property type="entry name" value="DDR_dom"/>
</dbReference>
<dbReference type="InterPro" id="IPR040916">
    <property type="entry name" value="DDR_swiveling"/>
</dbReference>
<dbReference type="InterPro" id="IPR009191">
    <property type="entry name" value="DDRA"/>
</dbReference>
<dbReference type="InterPro" id="IPR028975">
    <property type="entry name" value="DDRA_swiveling_dom_sf"/>
</dbReference>
<dbReference type="InterPro" id="IPR012340">
    <property type="entry name" value="NA-bd_OB-fold"/>
</dbReference>
<dbReference type="NCBIfam" id="TIGR04491">
    <property type="entry name" value="reactive_PduG"/>
    <property type="match status" value="1"/>
</dbReference>
<dbReference type="Pfam" id="PF08841">
    <property type="entry name" value="DDR"/>
    <property type="match status" value="1"/>
</dbReference>
<dbReference type="Pfam" id="PF18427">
    <property type="entry name" value="DDR_swiveling"/>
    <property type="match status" value="1"/>
</dbReference>
<dbReference type="PIRSF" id="PIRSF011502">
    <property type="entry name" value="DdrA_PduG"/>
    <property type="match status" value="1"/>
</dbReference>
<dbReference type="SUPFAM" id="SSF53067">
    <property type="entry name" value="Actin-like ATPase domain"/>
    <property type="match status" value="2"/>
</dbReference>
<dbReference type="SUPFAM" id="SSF82317">
    <property type="entry name" value="Swiveling domain of dehydratase reactivase alpha subunit"/>
    <property type="match status" value="1"/>
</dbReference>
<name>DDRA_KLEM8</name>
<proteinExistence type="evidence at protein level"/>
<accession>O68195</accession>
<accession>G8WE31</accession>
<gene>
    <name evidence="11" type="primary">ddrA</name>
    <name evidence="10" type="synonym">pduG</name>
    <name type="ordered locus">KOX_01470</name>
</gene>
<organism>
    <name type="scientific">Klebsiella michiganensis (strain ATCC 8724 / DSM 4798 / JCM 20051 / NBRC 3318 / NRRL B-199 / KCTC 1686 / BUCSAV 143 / CCM 1901)</name>
    <dbReference type="NCBI Taxonomy" id="1006551"/>
    <lineage>
        <taxon>Bacteria</taxon>
        <taxon>Pseudomonadati</taxon>
        <taxon>Pseudomonadota</taxon>
        <taxon>Gammaproteobacteria</taxon>
        <taxon>Enterobacterales</taxon>
        <taxon>Enterobacteriaceae</taxon>
        <taxon>Klebsiella/Raoultella group</taxon>
        <taxon>Klebsiella</taxon>
    </lineage>
</organism>
<protein>
    <recommendedName>
        <fullName evidence="11">Diol dehydratase-reactivating factor large subunit</fullName>
        <shortName>DDR large subunit</shortName>
    </recommendedName>
    <alternativeName>
        <fullName evidence="9">Diol dehydratase-reactivase large subunit</fullName>
    </alternativeName>
    <alternativeName>
        <fullName evidence="8">Diol dehydratase-reactivating factor alpha subunit</fullName>
        <shortName>DDR alpha subunit</shortName>
        <shortName>DDRA</shortName>
    </alternativeName>
</protein>